<proteinExistence type="inferred from homology"/>
<comment type="similarity">
    <text evidence="1">Belongs to the bacterial ribosomal protein bL35 family.</text>
</comment>
<gene>
    <name evidence="1" type="primary">rpmI</name>
</gene>
<evidence type="ECO:0000255" key="1">
    <source>
        <dbReference type="HAMAP-Rule" id="MF_00514"/>
    </source>
</evidence>
<evidence type="ECO:0000256" key="2">
    <source>
        <dbReference type="SAM" id="MobiDB-lite"/>
    </source>
</evidence>
<evidence type="ECO:0000305" key="3"/>
<keyword id="KW-0687">Ribonucleoprotein</keyword>
<keyword id="KW-0689">Ribosomal protein</keyword>
<reference key="1">
    <citation type="submission" date="2000-12" db="EMBL/GenBank/DDBJ databases">
        <title>Control of PheST in Azotobacter vinelandii.</title>
        <authorList>
            <person name="Tindale A.E."/>
            <person name="Mehrotra M."/>
            <person name="Macyk A.S."/>
            <person name="Kujat-Choy S."/>
            <person name="Page W.J."/>
        </authorList>
    </citation>
    <scope>NUCLEOTIDE SEQUENCE [GENOMIC DNA]</scope>
    <source>
        <strain>UA22</strain>
    </source>
</reference>
<name>RL35_AZOVI</name>
<dbReference type="EMBL" id="AF332624">
    <property type="protein sequence ID" value="AAL87032.1"/>
    <property type="molecule type" value="Genomic_DNA"/>
</dbReference>
<dbReference type="RefSeq" id="WP_012700656.1">
    <property type="nucleotide sequence ID" value="NZ_FPKM01000012.1"/>
</dbReference>
<dbReference type="SMR" id="Q8RQ00"/>
<dbReference type="GeneID" id="88185275"/>
<dbReference type="OMA" id="PKIKTHR"/>
<dbReference type="GO" id="GO:0022625">
    <property type="term" value="C:cytosolic large ribosomal subunit"/>
    <property type="evidence" value="ECO:0007669"/>
    <property type="project" value="TreeGrafter"/>
</dbReference>
<dbReference type="GO" id="GO:0003735">
    <property type="term" value="F:structural constituent of ribosome"/>
    <property type="evidence" value="ECO:0007669"/>
    <property type="project" value="InterPro"/>
</dbReference>
<dbReference type="GO" id="GO:0006412">
    <property type="term" value="P:translation"/>
    <property type="evidence" value="ECO:0007669"/>
    <property type="project" value="UniProtKB-UniRule"/>
</dbReference>
<dbReference type="FunFam" id="4.10.410.60:FF:000001">
    <property type="entry name" value="50S ribosomal protein L35"/>
    <property type="match status" value="1"/>
</dbReference>
<dbReference type="Gene3D" id="4.10.410.60">
    <property type="match status" value="1"/>
</dbReference>
<dbReference type="HAMAP" id="MF_00514">
    <property type="entry name" value="Ribosomal_bL35"/>
    <property type="match status" value="1"/>
</dbReference>
<dbReference type="InterPro" id="IPR001706">
    <property type="entry name" value="Ribosomal_bL35"/>
</dbReference>
<dbReference type="InterPro" id="IPR021137">
    <property type="entry name" value="Ribosomal_bL35-like"/>
</dbReference>
<dbReference type="InterPro" id="IPR018265">
    <property type="entry name" value="Ribosomal_bL35_CS"/>
</dbReference>
<dbReference type="InterPro" id="IPR037229">
    <property type="entry name" value="Ribosomal_bL35_sf"/>
</dbReference>
<dbReference type="NCBIfam" id="TIGR00001">
    <property type="entry name" value="rpmI_bact"/>
    <property type="match status" value="1"/>
</dbReference>
<dbReference type="PANTHER" id="PTHR33343">
    <property type="entry name" value="54S RIBOSOMAL PROTEIN BL35M"/>
    <property type="match status" value="1"/>
</dbReference>
<dbReference type="PANTHER" id="PTHR33343:SF1">
    <property type="entry name" value="LARGE RIBOSOMAL SUBUNIT PROTEIN BL35M"/>
    <property type="match status" value="1"/>
</dbReference>
<dbReference type="Pfam" id="PF01632">
    <property type="entry name" value="Ribosomal_L35p"/>
    <property type="match status" value="1"/>
</dbReference>
<dbReference type="PRINTS" id="PR00064">
    <property type="entry name" value="RIBOSOMALL35"/>
</dbReference>
<dbReference type="SUPFAM" id="SSF143034">
    <property type="entry name" value="L35p-like"/>
    <property type="match status" value="1"/>
</dbReference>
<dbReference type="PROSITE" id="PS00936">
    <property type="entry name" value="RIBOSOMAL_L35"/>
    <property type="match status" value="1"/>
</dbReference>
<protein>
    <recommendedName>
        <fullName evidence="1">Large ribosomal subunit protein bL35</fullName>
    </recommendedName>
    <alternativeName>
        <fullName evidence="3">50S ribosomal protein L35</fullName>
    </alternativeName>
</protein>
<sequence>MPKMKTKSGAKKRFKPTASGFKHKHAFKSHILTKMTTKRKRQLRGTSLMHPSDVAKVERMLRVR</sequence>
<organism>
    <name type="scientific">Azotobacter vinelandii</name>
    <dbReference type="NCBI Taxonomy" id="354"/>
    <lineage>
        <taxon>Bacteria</taxon>
        <taxon>Pseudomonadati</taxon>
        <taxon>Pseudomonadota</taxon>
        <taxon>Gammaproteobacteria</taxon>
        <taxon>Pseudomonadales</taxon>
        <taxon>Pseudomonadaceae</taxon>
        <taxon>Azotobacter</taxon>
    </lineage>
</organism>
<feature type="chain" id="PRO_0000177319" description="Large ribosomal subunit protein bL35">
    <location>
        <begin position="1"/>
        <end position="64"/>
    </location>
</feature>
<feature type="region of interest" description="Disordered" evidence="2">
    <location>
        <begin position="1"/>
        <end position="27"/>
    </location>
</feature>
<accession>Q8RQ00</accession>